<feature type="peptide" id="PRO_0000043626" description="Varv peptide F">
    <location>
        <begin position="1"/>
        <end position="29"/>
    </location>
</feature>
<feature type="disulfide bond">
    <location>
        <begin position="5"/>
        <end position="19"/>
    </location>
</feature>
<feature type="disulfide bond">
    <location>
        <begin position="9"/>
        <end position="21"/>
    </location>
</feature>
<feature type="disulfide bond">
    <location>
        <begin position="14"/>
        <end position="26"/>
    </location>
</feature>
<feature type="cross-link" description="Cyclopeptide (Gly-Asn)">
    <location>
        <begin position="1"/>
        <end position="29"/>
    </location>
</feature>
<feature type="strand" evidence="5">
    <location>
        <begin position="2"/>
        <end position="8"/>
    </location>
</feature>
<feature type="helix" evidence="5">
    <location>
        <begin position="9"/>
        <end position="11"/>
    </location>
</feature>
<feature type="strand" evidence="6">
    <location>
        <begin position="20"/>
        <end position="22"/>
    </location>
</feature>
<feature type="strand" evidence="6">
    <location>
        <begin position="25"/>
        <end position="28"/>
    </location>
</feature>
<organism>
    <name type="scientific">Viola arvensis</name>
    <name type="common">European field pansy</name>
    <name type="synonym">Field violet</name>
    <dbReference type="NCBI Taxonomy" id="97415"/>
    <lineage>
        <taxon>Eukaryota</taxon>
        <taxon>Viridiplantae</taxon>
        <taxon>Streptophyta</taxon>
        <taxon>Embryophyta</taxon>
        <taxon>Tracheophyta</taxon>
        <taxon>Spermatophyta</taxon>
        <taxon>Magnoliopsida</taxon>
        <taxon>eudicotyledons</taxon>
        <taxon>Gunneridae</taxon>
        <taxon>Pentapetalae</taxon>
        <taxon>rosids</taxon>
        <taxon>fabids</taxon>
        <taxon>Malpighiales</taxon>
        <taxon>Violaceae</taxon>
        <taxon>Viola</taxon>
        <taxon>Viola subgen. Viola</taxon>
        <taxon>Viola sect. Melanium</taxon>
        <taxon>Viola subsect. Bracteolatae</taxon>
    </lineage>
</organism>
<accession>P58451</accession>
<evidence type="ECO:0000255" key="1">
    <source>
        <dbReference type="PROSITE-ProRule" id="PRU00395"/>
    </source>
</evidence>
<evidence type="ECO:0000269" key="2">
    <source>
    </source>
</evidence>
<evidence type="ECO:0000269" key="3">
    <source>
    </source>
</evidence>
<evidence type="ECO:0000305" key="4"/>
<evidence type="ECO:0007829" key="5">
    <source>
        <dbReference type="PDB" id="2K7G"/>
    </source>
</evidence>
<evidence type="ECO:0007829" key="6">
    <source>
        <dbReference type="PDB" id="3E4H"/>
    </source>
</evidence>
<reference key="1">
    <citation type="journal article" date="1999" name="J. Nat. Prod.">
        <title>Seven novel macrocyclic polypeptides from Viola arvensis.</title>
        <authorList>
            <person name="Goeransson U."/>
            <person name="Luijendijk T."/>
            <person name="Johansson S."/>
            <person name="Bohlin L."/>
            <person name="Claeson P."/>
        </authorList>
    </citation>
    <scope>PROTEIN SEQUENCE</scope>
    <scope>MASS SPECTROMETRY</scope>
</reference>
<reference key="2">
    <citation type="journal article" date="2002" name="Mol. Cancer Ther.">
        <title>Cyclotides: a novel type of cytotoxic agents.</title>
        <authorList>
            <person name="Lindholm P."/>
            <person name="Goransson U."/>
            <person name="Johansson S."/>
            <person name="Claeson P."/>
            <person name="Gullbo J."/>
            <person name="Larsson R."/>
            <person name="Bohlin L."/>
            <person name="Backlund A."/>
        </authorList>
    </citation>
    <scope>FUNCTION</scope>
</reference>
<sequence>GVPICGETCTLGTCYTAGCSCSWPVCTRN</sequence>
<proteinExistence type="evidence at protein level"/>
<name>VARF_VIOAR</name>
<protein>
    <recommendedName>
        <fullName>Varv peptide F</fullName>
    </recommendedName>
</protein>
<dbReference type="PDB" id="2K7G">
    <property type="method" value="NMR"/>
    <property type="chains" value="A=1-29"/>
</dbReference>
<dbReference type="PDB" id="3E4H">
    <property type="method" value="X-ray"/>
    <property type="resolution" value="1.80 A"/>
    <property type="chains" value="A=5-29"/>
</dbReference>
<dbReference type="PDBsum" id="2K7G"/>
<dbReference type="PDBsum" id="3E4H"/>
<dbReference type="SMR" id="P58451"/>
<dbReference type="EvolutionaryTrace" id="P58451"/>
<dbReference type="GO" id="GO:0006952">
    <property type="term" value="P:defense response"/>
    <property type="evidence" value="ECO:0000314"/>
    <property type="project" value="UniProtKB"/>
</dbReference>
<dbReference type="InterPro" id="IPR005535">
    <property type="entry name" value="Cyclotide"/>
</dbReference>
<dbReference type="InterPro" id="IPR012324">
    <property type="entry name" value="Cyclotide_moebius_CS"/>
</dbReference>
<dbReference type="InterPro" id="IPR036146">
    <property type="entry name" value="Cyclotide_sf"/>
</dbReference>
<dbReference type="Pfam" id="PF03784">
    <property type="entry name" value="Cyclotide"/>
    <property type="match status" value="1"/>
</dbReference>
<dbReference type="PIRSF" id="PIRSF037891">
    <property type="entry name" value="Cycloviolacin"/>
    <property type="match status" value="1"/>
</dbReference>
<dbReference type="SUPFAM" id="SSF57038">
    <property type="entry name" value="Cyclotides"/>
    <property type="match status" value="1"/>
</dbReference>
<dbReference type="PROSITE" id="PS51052">
    <property type="entry name" value="CYCLOTIDE"/>
    <property type="match status" value="1"/>
</dbReference>
<dbReference type="PROSITE" id="PS60009">
    <property type="entry name" value="CYCLOTIDE_MOEBIUS"/>
    <property type="match status" value="1"/>
</dbReference>
<keyword id="KW-0002">3D-structure</keyword>
<keyword id="KW-0903">Direct protein sequencing</keyword>
<keyword id="KW-1015">Disulfide bond</keyword>
<keyword id="KW-0960">Knottin</keyword>
<keyword id="KW-0611">Plant defense</keyword>
<comment type="function">
    <text evidence="1 3">Probably participates in a plant defense mechanism. Has cytotoxic activity against a variety of drug-resistant and drug-sensitive human tumor cell lines.</text>
</comment>
<comment type="domain">
    <text>The presence of a 'disulfide through disulfide knot' structurally defines this protein as a knottin.</text>
</comment>
<comment type="PTM">
    <text>This is a cyclic peptide.</text>
</comment>
<comment type="mass spectrometry"/>
<comment type="similarity">
    <text evidence="1">Belongs to the cyclotide family. Moebius subfamily.</text>
</comment>
<comment type="caution">
    <text evidence="4">This peptide is cyclic. The start position was chosen by similarity to OAK1 (kalata-B1) for which the DNA sequence is known.</text>
</comment>